<feature type="chain" id="PRO_0000363809" description="Eukaryotic translation initiation factor 3 subunit B">
    <location>
        <begin position="1"/>
        <end position="740"/>
    </location>
</feature>
<feature type="domain" description="RRM" evidence="1">
    <location>
        <begin position="40"/>
        <end position="126"/>
    </location>
</feature>
<feature type="repeat" description="WD 1">
    <location>
        <begin position="193"/>
        <end position="230"/>
    </location>
</feature>
<feature type="repeat" description="WD 2">
    <location>
        <begin position="232"/>
        <end position="289"/>
    </location>
</feature>
<feature type="repeat" description="WD 3">
    <location>
        <begin position="302"/>
        <end position="343"/>
    </location>
</feature>
<feature type="repeat" description="WD 4">
    <location>
        <begin position="455"/>
        <end position="496"/>
    </location>
</feature>
<feature type="repeat" description="WD 5">
    <location>
        <begin position="513"/>
        <end position="556"/>
    </location>
</feature>
<feature type="repeat" description="WD 6">
    <location>
        <begin position="571"/>
        <end position="609"/>
    </location>
</feature>
<feature type="region of interest" description="Disordered" evidence="2">
    <location>
        <begin position="1"/>
        <end position="20"/>
    </location>
</feature>
<feature type="region of interest" description="Disordered" evidence="2">
    <location>
        <begin position="696"/>
        <end position="721"/>
    </location>
</feature>
<feature type="compositionally biased region" description="Polar residues" evidence="2">
    <location>
        <begin position="1"/>
        <end position="10"/>
    </location>
</feature>
<proteinExistence type="inferred from homology"/>
<dbReference type="EMBL" id="AAHF01000007">
    <property type="protein sequence ID" value="EAL87915.1"/>
    <property type="molecule type" value="Genomic_DNA"/>
</dbReference>
<dbReference type="RefSeq" id="XP_749953.1">
    <property type="nucleotide sequence ID" value="XM_744860.1"/>
</dbReference>
<dbReference type="SMR" id="Q4WKL7"/>
<dbReference type="FunCoup" id="Q4WKL7">
    <property type="interactions" value="1339"/>
</dbReference>
<dbReference type="STRING" id="330879.Q4WKL7"/>
<dbReference type="EnsemblFungi" id="EAL87915">
    <property type="protein sequence ID" value="EAL87915"/>
    <property type="gene ID" value="AFUA_1G02030"/>
</dbReference>
<dbReference type="GeneID" id="3507798"/>
<dbReference type="KEGG" id="afm:AFUA_1G02030"/>
<dbReference type="VEuPathDB" id="FungiDB:Afu1g02030"/>
<dbReference type="eggNOG" id="KOG2314">
    <property type="taxonomic scope" value="Eukaryota"/>
</dbReference>
<dbReference type="HOGENOM" id="CLU_011152_4_0_1"/>
<dbReference type="InParanoid" id="Q4WKL7"/>
<dbReference type="OMA" id="LWGGPQF"/>
<dbReference type="OrthoDB" id="10250414at2759"/>
<dbReference type="Proteomes" id="UP000002530">
    <property type="component" value="Chromosome 1"/>
</dbReference>
<dbReference type="GO" id="GO:0010494">
    <property type="term" value="C:cytoplasmic stress granule"/>
    <property type="evidence" value="ECO:0007669"/>
    <property type="project" value="EnsemblFungi"/>
</dbReference>
<dbReference type="GO" id="GO:0016282">
    <property type="term" value="C:eukaryotic 43S preinitiation complex"/>
    <property type="evidence" value="ECO:0007669"/>
    <property type="project" value="UniProtKB-UniRule"/>
</dbReference>
<dbReference type="GO" id="GO:0033290">
    <property type="term" value="C:eukaryotic 48S preinitiation complex"/>
    <property type="evidence" value="ECO:0007669"/>
    <property type="project" value="UniProtKB-UniRule"/>
</dbReference>
<dbReference type="GO" id="GO:0005852">
    <property type="term" value="C:eukaryotic translation initiation factor 3 complex"/>
    <property type="evidence" value="ECO:0000318"/>
    <property type="project" value="GO_Central"/>
</dbReference>
<dbReference type="GO" id="GO:0071540">
    <property type="term" value="C:eukaryotic translation initiation factor 3 complex, eIF3e"/>
    <property type="evidence" value="ECO:0007669"/>
    <property type="project" value="EnsemblFungi"/>
</dbReference>
<dbReference type="GO" id="GO:0071541">
    <property type="term" value="C:eukaryotic translation initiation factor 3 complex, eIF3m"/>
    <property type="evidence" value="ECO:0007669"/>
    <property type="project" value="EnsemblFungi"/>
</dbReference>
<dbReference type="GO" id="GO:0043614">
    <property type="term" value="C:multi-eIF complex"/>
    <property type="evidence" value="ECO:0007669"/>
    <property type="project" value="EnsemblFungi"/>
</dbReference>
<dbReference type="GO" id="GO:0042802">
    <property type="term" value="F:identical protein binding"/>
    <property type="evidence" value="ECO:0007669"/>
    <property type="project" value="EnsemblFungi"/>
</dbReference>
<dbReference type="GO" id="GO:0003723">
    <property type="term" value="F:RNA binding"/>
    <property type="evidence" value="ECO:0007669"/>
    <property type="project" value="UniProtKB-UniRule"/>
</dbReference>
<dbReference type="GO" id="GO:0003743">
    <property type="term" value="F:translation initiation factor activity"/>
    <property type="evidence" value="ECO:0007669"/>
    <property type="project" value="UniProtKB-UniRule"/>
</dbReference>
<dbReference type="GO" id="GO:0031369">
    <property type="term" value="F:translation initiation factor binding"/>
    <property type="evidence" value="ECO:0007669"/>
    <property type="project" value="InterPro"/>
</dbReference>
<dbReference type="GO" id="GO:0001732">
    <property type="term" value="P:formation of cytoplasmic translation initiation complex"/>
    <property type="evidence" value="ECO:0007669"/>
    <property type="project" value="UniProtKB-UniRule"/>
</dbReference>
<dbReference type="GO" id="GO:0006413">
    <property type="term" value="P:translational initiation"/>
    <property type="evidence" value="ECO:0000318"/>
    <property type="project" value="GO_Central"/>
</dbReference>
<dbReference type="CDD" id="cd12278">
    <property type="entry name" value="RRM_eIF3B"/>
    <property type="match status" value="1"/>
</dbReference>
<dbReference type="FunFam" id="2.130.10.10:FF:000419">
    <property type="entry name" value="Eukaryotic translation initiation factor 3 subunit B"/>
    <property type="match status" value="1"/>
</dbReference>
<dbReference type="FunFam" id="3.30.70.330:FF:000235">
    <property type="entry name" value="Eukaryotic translation initiation factor 3 subunit B"/>
    <property type="match status" value="1"/>
</dbReference>
<dbReference type="Gene3D" id="3.30.70.330">
    <property type="match status" value="1"/>
</dbReference>
<dbReference type="Gene3D" id="2.130.10.10">
    <property type="entry name" value="YVTN repeat-like/Quinoprotein amine dehydrogenase"/>
    <property type="match status" value="2"/>
</dbReference>
<dbReference type="HAMAP" id="MF_03001">
    <property type="entry name" value="eIF3b"/>
    <property type="match status" value="1"/>
</dbReference>
<dbReference type="InterPro" id="IPR011400">
    <property type="entry name" value="EIF3B"/>
</dbReference>
<dbReference type="InterPro" id="IPR034363">
    <property type="entry name" value="eIF3B_RRM"/>
</dbReference>
<dbReference type="InterPro" id="IPR012677">
    <property type="entry name" value="Nucleotide-bd_a/b_plait_sf"/>
</dbReference>
<dbReference type="InterPro" id="IPR035979">
    <property type="entry name" value="RBD_domain_sf"/>
</dbReference>
<dbReference type="InterPro" id="IPR000504">
    <property type="entry name" value="RRM_dom"/>
</dbReference>
<dbReference type="InterPro" id="IPR013979">
    <property type="entry name" value="TIF_beta_prop-like"/>
</dbReference>
<dbReference type="InterPro" id="IPR015943">
    <property type="entry name" value="WD40/YVTN_repeat-like_dom_sf"/>
</dbReference>
<dbReference type="PANTHER" id="PTHR14068">
    <property type="entry name" value="EUKARYOTIC TRANSLATION INITIATION FACTOR 3 EIF3 -RELATED"/>
    <property type="match status" value="1"/>
</dbReference>
<dbReference type="PANTHER" id="PTHR14068:SF0">
    <property type="entry name" value="EUKARYOTIC TRANSLATION INITIATION FACTOR 3 SUBUNIT B"/>
    <property type="match status" value="1"/>
</dbReference>
<dbReference type="Pfam" id="PF08662">
    <property type="entry name" value="eIF2A"/>
    <property type="match status" value="1"/>
</dbReference>
<dbReference type="Pfam" id="PF00076">
    <property type="entry name" value="RRM_1"/>
    <property type="match status" value="1"/>
</dbReference>
<dbReference type="PIRSF" id="PIRSF036424">
    <property type="entry name" value="eIF3b"/>
    <property type="match status" value="1"/>
</dbReference>
<dbReference type="SMART" id="SM00360">
    <property type="entry name" value="RRM"/>
    <property type="match status" value="1"/>
</dbReference>
<dbReference type="SUPFAM" id="SSF54928">
    <property type="entry name" value="RNA-binding domain, RBD"/>
    <property type="match status" value="1"/>
</dbReference>
<dbReference type="SUPFAM" id="SSF69322">
    <property type="entry name" value="Tricorn protease domain 2"/>
    <property type="match status" value="1"/>
</dbReference>
<dbReference type="PROSITE" id="PS50102">
    <property type="entry name" value="RRM"/>
    <property type="match status" value="1"/>
</dbReference>
<reference key="1">
    <citation type="journal article" date="2005" name="Nature">
        <title>Genomic sequence of the pathogenic and allergenic filamentous fungus Aspergillus fumigatus.</title>
        <authorList>
            <person name="Nierman W.C."/>
            <person name="Pain A."/>
            <person name="Anderson M.J."/>
            <person name="Wortman J.R."/>
            <person name="Kim H.S."/>
            <person name="Arroyo J."/>
            <person name="Berriman M."/>
            <person name="Abe K."/>
            <person name="Archer D.B."/>
            <person name="Bermejo C."/>
            <person name="Bennett J.W."/>
            <person name="Bowyer P."/>
            <person name="Chen D."/>
            <person name="Collins M."/>
            <person name="Coulsen R."/>
            <person name="Davies R."/>
            <person name="Dyer P.S."/>
            <person name="Farman M.L."/>
            <person name="Fedorova N."/>
            <person name="Fedorova N.D."/>
            <person name="Feldblyum T.V."/>
            <person name="Fischer R."/>
            <person name="Fosker N."/>
            <person name="Fraser A."/>
            <person name="Garcia J.L."/>
            <person name="Garcia M.J."/>
            <person name="Goble A."/>
            <person name="Goldman G.H."/>
            <person name="Gomi K."/>
            <person name="Griffith-Jones S."/>
            <person name="Gwilliam R."/>
            <person name="Haas B.J."/>
            <person name="Haas H."/>
            <person name="Harris D.E."/>
            <person name="Horiuchi H."/>
            <person name="Huang J."/>
            <person name="Humphray S."/>
            <person name="Jimenez J."/>
            <person name="Keller N."/>
            <person name="Khouri H."/>
            <person name="Kitamoto K."/>
            <person name="Kobayashi T."/>
            <person name="Konzack S."/>
            <person name="Kulkarni R."/>
            <person name="Kumagai T."/>
            <person name="Lafton A."/>
            <person name="Latge J.-P."/>
            <person name="Li W."/>
            <person name="Lord A."/>
            <person name="Lu C."/>
            <person name="Majoros W.H."/>
            <person name="May G.S."/>
            <person name="Miller B.L."/>
            <person name="Mohamoud Y."/>
            <person name="Molina M."/>
            <person name="Monod M."/>
            <person name="Mouyna I."/>
            <person name="Mulligan S."/>
            <person name="Murphy L.D."/>
            <person name="O'Neil S."/>
            <person name="Paulsen I."/>
            <person name="Penalva M.A."/>
            <person name="Pertea M."/>
            <person name="Price C."/>
            <person name="Pritchard B.L."/>
            <person name="Quail M.A."/>
            <person name="Rabbinowitsch E."/>
            <person name="Rawlins N."/>
            <person name="Rajandream M.A."/>
            <person name="Reichard U."/>
            <person name="Renauld H."/>
            <person name="Robson G.D."/>
            <person name="Rodriguez de Cordoba S."/>
            <person name="Rodriguez-Pena J.M."/>
            <person name="Ronning C.M."/>
            <person name="Rutter S."/>
            <person name="Salzberg S.L."/>
            <person name="Sanchez M."/>
            <person name="Sanchez-Ferrero J.C."/>
            <person name="Saunders D."/>
            <person name="Seeger K."/>
            <person name="Squares R."/>
            <person name="Squares S."/>
            <person name="Takeuchi M."/>
            <person name="Tekaia F."/>
            <person name="Turner G."/>
            <person name="Vazquez de Aldana C.R."/>
            <person name="Weidman J."/>
            <person name="White O."/>
            <person name="Woodward J.R."/>
            <person name="Yu J.-H."/>
            <person name="Fraser C.M."/>
            <person name="Galagan J.E."/>
            <person name="Asai K."/>
            <person name="Machida M."/>
            <person name="Hall N."/>
            <person name="Barrell B.G."/>
            <person name="Denning D.W."/>
        </authorList>
    </citation>
    <scope>NUCLEOTIDE SEQUENCE [LARGE SCALE GENOMIC DNA]</scope>
    <source>
        <strain>ATCC MYA-4609 / CBS 101355 / FGSC A1100 / Af293</strain>
    </source>
</reference>
<sequence length="740" mass="84487">MAPSFDTLSEQDLHEEEEEEIDFSDLKAQYEVKLEEGLDTFVVIDGLPVVPEESRQKLIKFLLRKLNTVGHTSEDAVFMPLNDKNMSEGYAFVEFETPEQAVAAVKQLHGTPLDKKHTLLVNKLMDIERYGREGRIDEEYKPPAIEPFKEKEHLRSWLADPNARDQFALYRGDKVGVFWNNKNHPPENVVDRAHWTQLFVQWSPKGTYLASVHPQGVQLWGGPAFSKQKQFPHPFVQLIEFSPGESYLTTWSARPIQVEEGQSILTYEEEGKNIIVWDIATGKPLRSFVSHDLTAGPAGDAEPKKKVQWPAFKWSADEKYVARMLQHQSISIYELPRMNLLGKTSVKIDGVMDFEWSPATVTREGVKQYEQLLCFWTPEIGSSPARVAMMSVPSKEIVRTRNLFNVSDVKLHWQSQGLYVCVKVDRHSKSKKSMATNLEIFRVREKGVPVEVVDSLKDTVINFAWEPNGNRFVLITTGEAVAGAAVAPKTAVSFFAPEKKGGAIGNFKLIRTIEKKNSNAIYWSPKGRFVVVATVHSQTSFDMDFWDMDFEGEKPEAEKDFAANLQLMKTTEHYGVTDIDWDPTGRYVVSSASVWTHQLENGWNLHTFAGQTLSENPTDKFKQFLWRPRPPTLLSKEEQKQVRKNLREYSKEFDEEDRYAVDIANTAVVEKRKRVLNEWIAWIRREKELLAEEKDAYGLPEEADDPKLAKDAAATTQEQGETVVEEIVEEIIEESEEVIG</sequence>
<keyword id="KW-0963">Cytoplasm</keyword>
<keyword id="KW-0396">Initiation factor</keyword>
<keyword id="KW-0648">Protein biosynthesis</keyword>
<keyword id="KW-1185">Reference proteome</keyword>
<keyword id="KW-0677">Repeat</keyword>
<keyword id="KW-0694">RNA-binding</keyword>
<keyword id="KW-0853">WD repeat</keyword>
<comment type="function">
    <text evidence="1">RNA-binding component of the eukaryotic translation initiation factor 3 (eIF-3) complex, which is involved in protein synthesis of a specialized repertoire of mRNAs and, together with other initiation factors, stimulates binding of mRNA and methionyl-tRNAi to the 40S ribosome. The eIF-3 complex specifically targets and initiates translation of a subset of mRNAs involved in cell proliferation.</text>
</comment>
<comment type="subunit">
    <text evidence="1">Component of the eukaryotic translation initiation factor 3 (eIF-3) complex.</text>
</comment>
<comment type="subcellular location">
    <subcellularLocation>
        <location evidence="1">Cytoplasm</location>
    </subcellularLocation>
</comment>
<comment type="similarity">
    <text evidence="1">Belongs to the eIF-3 subunit B family.</text>
</comment>
<accession>Q4WKL7</accession>
<organism>
    <name type="scientific">Aspergillus fumigatus (strain ATCC MYA-4609 / CBS 101355 / FGSC A1100 / Af293)</name>
    <name type="common">Neosartorya fumigata</name>
    <dbReference type="NCBI Taxonomy" id="330879"/>
    <lineage>
        <taxon>Eukaryota</taxon>
        <taxon>Fungi</taxon>
        <taxon>Dikarya</taxon>
        <taxon>Ascomycota</taxon>
        <taxon>Pezizomycotina</taxon>
        <taxon>Eurotiomycetes</taxon>
        <taxon>Eurotiomycetidae</taxon>
        <taxon>Eurotiales</taxon>
        <taxon>Aspergillaceae</taxon>
        <taxon>Aspergillus</taxon>
        <taxon>Aspergillus subgen. Fumigati</taxon>
    </lineage>
</organism>
<gene>
    <name type="primary">prt1</name>
    <name type="ORF">AFUA_1G02030</name>
</gene>
<name>EIF3B_ASPFU</name>
<evidence type="ECO:0000255" key="1">
    <source>
        <dbReference type="HAMAP-Rule" id="MF_03001"/>
    </source>
</evidence>
<evidence type="ECO:0000256" key="2">
    <source>
        <dbReference type="SAM" id="MobiDB-lite"/>
    </source>
</evidence>
<protein>
    <recommendedName>
        <fullName evidence="1">Eukaryotic translation initiation factor 3 subunit B</fullName>
        <shortName evidence="1">eIF3b</shortName>
    </recommendedName>
    <alternativeName>
        <fullName evidence="1">Eukaryotic translation initiation factor 3 90 kDa subunit homolog</fullName>
        <shortName evidence="1">eIF3 p90</shortName>
    </alternativeName>
    <alternativeName>
        <fullName>Translation initiation factor eIF3 p90 subunit homolog</fullName>
    </alternativeName>
</protein>